<comment type="catalytic activity">
    <reaction>
        <text>L-tryptophan + H2O = indole + pyruvate + NH4(+)</text>
        <dbReference type="Rhea" id="RHEA:19553"/>
        <dbReference type="ChEBI" id="CHEBI:15361"/>
        <dbReference type="ChEBI" id="CHEBI:15377"/>
        <dbReference type="ChEBI" id="CHEBI:16881"/>
        <dbReference type="ChEBI" id="CHEBI:28938"/>
        <dbReference type="ChEBI" id="CHEBI:57912"/>
        <dbReference type="EC" id="4.1.99.1"/>
    </reaction>
</comment>
<comment type="cofactor">
    <cofactor>
        <name>pyridoxal 5'-phosphate</name>
        <dbReference type="ChEBI" id="CHEBI:597326"/>
    </cofactor>
</comment>
<comment type="pathway">
    <text>Amino-acid degradation; L-tryptophan degradation via pyruvate pathway; indole and pyruvate from L-tryptophan: step 1/1.</text>
</comment>
<comment type="subunit">
    <text>Homotetramer.</text>
</comment>
<comment type="similarity">
    <text evidence="1">Belongs to the beta-eliminating lyase family.</text>
</comment>
<protein>
    <recommendedName>
        <fullName>Tryptophanase</fullName>
        <ecNumber>4.1.99.1</ecNumber>
    </recommendedName>
    <alternativeName>
        <fullName>L-tryptophan indole-lyase</fullName>
        <shortName>TNase</shortName>
    </alternativeName>
</protein>
<evidence type="ECO:0000305" key="1"/>
<evidence type="ECO:0007829" key="2">
    <source>
        <dbReference type="PDB" id="8V9P"/>
    </source>
</evidence>
<evidence type="ECO:0007829" key="3">
    <source>
        <dbReference type="PDB" id="9BNJ"/>
    </source>
</evidence>
<dbReference type="EC" id="4.1.99.1"/>
<dbReference type="EMBL" id="M93277">
    <property type="protein sequence ID" value="AAA25664.1"/>
    <property type="molecule type" value="Genomic_DNA"/>
</dbReference>
<dbReference type="PIR" id="B44038">
    <property type="entry name" value="B44038"/>
</dbReference>
<dbReference type="PDB" id="1AX4">
    <property type="method" value="X-ray"/>
    <property type="resolution" value="2.10 A"/>
    <property type="chains" value="A/B/C/D=1-467"/>
</dbReference>
<dbReference type="PDB" id="5W19">
    <property type="method" value="X-ray"/>
    <property type="resolution" value="2.10 A"/>
    <property type="chains" value="A/B/C/D=1-467"/>
</dbReference>
<dbReference type="PDB" id="5W1B">
    <property type="method" value="X-ray"/>
    <property type="resolution" value="2.00 A"/>
    <property type="chains" value="A/B/C/D=1-467"/>
</dbReference>
<dbReference type="PDB" id="8V2K">
    <property type="method" value="X-ray"/>
    <property type="resolution" value="1.81 A"/>
    <property type="chains" value="A/B/C/D=1-467"/>
</dbReference>
<dbReference type="PDB" id="8V4A">
    <property type="method" value="X-ray"/>
    <property type="resolution" value="1.96 A"/>
    <property type="chains" value="A/B/C/D=1-467"/>
</dbReference>
<dbReference type="PDB" id="8V6P">
    <property type="method" value="X-ray"/>
    <property type="resolution" value="1.74 A"/>
    <property type="chains" value="A/B/C/D=1-467"/>
</dbReference>
<dbReference type="PDB" id="8V9P">
    <property type="method" value="X-ray"/>
    <property type="resolution" value="1.85 A"/>
    <property type="chains" value="A/B/C/D=1-467"/>
</dbReference>
<dbReference type="PDB" id="9BLV">
    <property type="method" value="X-ray"/>
    <property type="resolution" value="1.78 A"/>
    <property type="chains" value="A/B/C/D=1-467"/>
</dbReference>
<dbReference type="PDB" id="9BNJ">
    <property type="method" value="X-ray"/>
    <property type="resolution" value="1.51 A"/>
    <property type="chains" value="A/B/C/D=1-467"/>
</dbReference>
<dbReference type="PDBsum" id="1AX4"/>
<dbReference type="PDBsum" id="5W19"/>
<dbReference type="PDBsum" id="5W1B"/>
<dbReference type="PDBsum" id="8V2K"/>
<dbReference type="PDBsum" id="8V4A"/>
<dbReference type="PDBsum" id="8V6P"/>
<dbReference type="PDBsum" id="8V9P"/>
<dbReference type="PDBsum" id="9BLV"/>
<dbReference type="PDBsum" id="9BNJ"/>
<dbReference type="SMR" id="P28796"/>
<dbReference type="STRING" id="585.DR95_2912"/>
<dbReference type="eggNOG" id="COG3033">
    <property type="taxonomic scope" value="Bacteria"/>
</dbReference>
<dbReference type="BRENDA" id="4.1.99.1">
    <property type="organism ID" value="5049"/>
</dbReference>
<dbReference type="SABIO-RK" id="P28796"/>
<dbReference type="UniPathway" id="UPA00332">
    <property type="reaction ID" value="UER00452"/>
</dbReference>
<dbReference type="EvolutionaryTrace" id="P28796"/>
<dbReference type="GO" id="GO:0009034">
    <property type="term" value="F:tryptophanase activity"/>
    <property type="evidence" value="ECO:0007669"/>
    <property type="project" value="UniProtKB-UniRule"/>
</dbReference>
<dbReference type="CDD" id="cd00617">
    <property type="entry name" value="Tnase_like"/>
    <property type="match status" value="1"/>
</dbReference>
<dbReference type="Gene3D" id="3.90.1150.10">
    <property type="entry name" value="Aspartate Aminotransferase, domain 1"/>
    <property type="match status" value="1"/>
</dbReference>
<dbReference type="Gene3D" id="3.40.640.10">
    <property type="entry name" value="Type I PLP-dependent aspartate aminotransferase-like (Major domain)"/>
    <property type="match status" value="1"/>
</dbReference>
<dbReference type="HAMAP" id="MF_00544">
    <property type="entry name" value="Tryptophanase"/>
    <property type="match status" value="1"/>
</dbReference>
<dbReference type="InterPro" id="IPR001597">
    <property type="entry name" value="ArAA_b-elim_lyase/Thr_aldolase"/>
</dbReference>
<dbReference type="InterPro" id="IPR011166">
    <property type="entry name" value="Beta-eliminating_lyase"/>
</dbReference>
<dbReference type="InterPro" id="IPR015424">
    <property type="entry name" value="PyrdxlP-dep_Trfase"/>
</dbReference>
<dbReference type="InterPro" id="IPR015421">
    <property type="entry name" value="PyrdxlP-dep_Trfase_major"/>
</dbReference>
<dbReference type="InterPro" id="IPR015422">
    <property type="entry name" value="PyrdxlP-dep_Trfase_small"/>
</dbReference>
<dbReference type="InterPro" id="IPR013440">
    <property type="entry name" value="TNase"/>
</dbReference>
<dbReference type="InterPro" id="IPR018176">
    <property type="entry name" value="Tryptophanase_CS"/>
</dbReference>
<dbReference type="NCBIfam" id="NF009709">
    <property type="entry name" value="PRK13238.1"/>
    <property type="match status" value="1"/>
</dbReference>
<dbReference type="PANTHER" id="PTHR32325">
    <property type="entry name" value="BETA-ELIMINATING LYASE-LIKE PROTEIN-RELATED"/>
    <property type="match status" value="1"/>
</dbReference>
<dbReference type="PANTHER" id="PTHR32325:SF4">
    <property type="entry name" value="TRYPTOPHANASE"/>
    <property type="match status" value="1"/>
</dbReference>
<dbReference type="Pfam" id="PF01212">
    <property type="entry name" value="Beta_elim_lyase"/>
    <property type="match status" value="1"/>
</dbReference>
<dbReference type="PIRSF" id="PIRSF001386">
    <property type="entry name" value="Trpase"/>
    <property type="match status" value="1"/>
</dbReference>
<dbReference type="SUPFAM" id="SSF53383">
    <property type="entry name" value="PLP-dependent transferases"/>
    <property type="match status" value="1"/>
</dbReference>
<dbReference type="PROSITE" id="PS00853">
    <property type="entry name" value="BETA_ELIM_LYASE"/>
    <property type="match status" value="1"/>
</dbReference>
<keyword id="KW-0002">3D-structure</keyword>
<keyword id="KW-0456">Lyase</keyword>
<keyword id="KW-0663">Pyridoxal phosphate</keyword>
<keyword id="KW-0823">Tryptophan catabolism</keyword>
<organism>
    <name type="scientific">Proteus vulgaris</name>
    <dbReference type="NCBI Taxonomy" id="585"/>
    <lineage>
        <taxon>Bacteria</taxon>
        <taxon>Pseudomonadati</taxon>
        <taxon>Pseudomonadota</taxon>
        <taxon>Gammaproteobacteria</taxon>
        <taxon>Enterobacterales</taxon>
        <taxon>Morganellaceae</taxon>
        <taxon>Proteus</taxon>
    </lineage>
</organism>
<name>TNAA_PROVU</name>
<feature type="chain" id="PRO_0000195619" description="Tryptophanase">
    <location>
        <begin position="1"/>
        <end position="467"/>
    </location>
</feature>
<feature type="modified residue" description="N6-(pyridoxal phosphate)lysine">
    <location>
        <position position="266"/>
    </location>
</feature>
<feature type="strand" evidence="3">
    <location>
        <begin position="8"/>
        <end position="16"/>
    </location>
</feature>
<feature type="helix" evidence="3">
    <location>
        <begin position="22"/>
        <end position="31"/>
    </location>
</feature>
<feature type="turn" evidence="3">
    <location>
        <begin position="32"/>
        <end position="34"/>
    </location>
</feature>
<feature type="helix" evidence="3">
    <location>
        <begin position="36"/>
        <end position="38"/>
    </location>
</feature>
<feature type="helix" evidence="3">
    <location>
        <begin position="41"/>
        <end position="43"/>
    </location>
</feature>
<feature type="strand" evidence="3">
    <location>
        <begin position="45"/>
        <end position="47"/>
    </location>
</feature>
<feature type="strand" evidence="3">
    <location>
        <begin position="51"/>
        <end position="53"/>
    </location>
</feature>
<feature type="helix" evidence="3">
    <location>
        <begin position="59"/>
        <end position="66"/>
    </location>
</feature>
<feature type="strand" evidence="3">
    <location>
        <begin position="72"/>
        <end position="74"/>
    </location>
</feature>
<feature type="helix" evidence="3">
    <location>
        <begin position="76"/>
        <end position="89"/>
    </location>
</feature>
<feature type="strand" evidence="3">
    <location>
        <begin position="93"/>
        <end position="99"/>
    </location>
</feature>
<feature type="helix" evidence="3">
    <location>
        <begin position="100"/>
        <end position="115"/>
    </location>
</feature>
<feature type="helix" evidence="3">
    <location>
        <begin position="117"/>
        <end position="119"/>
    </location>
</feature>
<feature type="strand" evidence="3">
    <location>
        <begin position="125"/>
        <end position="129"/>
    </location>
</feature>
<feature type="helix" evidence="3">
    <location>
        <begin position="133"/>
        <end position="141"/>
    </location>
</feature>
<feature type="strand" evidence="3">
    <location>
        <begin position="145"/>
        <end position="148"/>
    </location>
</feature>
<feature type="helix" evidence="3">
    <location>
        <begin position="152"/>
        <end position="155"/>
    </location>
</feature>
<feature type="strand" evidence="2">
    <location>
        <begin position="157"/>
        <end position="159"/>
    </location>
</feature>
<feature type="turn" evidence="3">
    <location>
        <begin position="162"/>
        <end position="165"/>
    </location>
</feature>
<feature type="helix" evidence="3">
    <location>
        <begin position="169"/>
        <end position="179"/>
    </location>
</feature>
<feature type="helix" evidence="3">
    <location>
        <begin position="181"/>
        <end position="183"/>
    </location>
</feature>
<feature type="strand" evidence="3">
    <location>
        <begin position="184"/>
        <end position="193"/>
    </location>
</feature>
<feature type="turn" evidence="3">
    <location>
        <begin position="194"/>
        <end position="197"/>
    </location>
</feature>
<feature type="helix" evidence="3">
    <location>
        <begin position="203"/>
        <end position="216"/>
    </location>
</feature>
<feature type="strand" evidence="3">
    <location>
        <begin position="220"/>
        <end position="223"/>
    </location>
</feature>
<feature type="helix" evidence="3">
    <location>
        <begin position="227"/>
        <end position="237"/>
    </location>
</feature>
<feature type="helix" evidence="3">
    <location>
        <begin position="239"/>
        <end position="241"/>
    </location>
</feature>
<feature type="helix" evidence="3">
    <location>
        <begin position="246"/>
        <end position="253"/>
    </location>
</feature>
<feature type="helix" evidence="3">
    <location>
        <begin position="254"/>
        <end position="256"/>
    </location>
</feature>
<feature type="strand" evidence="3">
    <location>
        <begin position="258"/>
        <end position="263"/>
    </location>
</feature>
<feature type="strand" evidence="3">
    <location>
        <begin position="274"/>
        <end position="280"/>
    </location>
</feature>
<feature type="helix" evidence="3">
    <location>
        <begin position="282"/>
        <end position="295"/>
    </location>
</feature>
<feature type="turn" evidence="3">
    <location>
        <begin position="299"/>
        <end position="303"/>
    </location>
</feature>
<feature type="helix" evidence="3">
    <location>
        <begin position="306"/>
        <end position="318"/>
    </location>
</feature>
<feature type="helix" evidence="3">
    <location>
        <begin position="322"/>
        <end position="341"/>
    </location>
</feature>
<feature type="strand" evidence="3">
    <location>
        <begin position="352"/>
        <end position="358"/>
    </location>
</feature>
<feature type="helix" evidence="3">
    <location>
        <begin position="359"/>
        <end position="362"/>
    </location>
</feature>
<feature type="helix" evidence="3">
    <location>
        <begin position="368"/>
        <end position="370"/>
    </location>
</feature>
<feature type="helix" evidence="3">
    <location>
        <begin position="372"/>
        <end position="384"/>
    </location>
</feature>
<feature type="strand" evidence="3">
    <location>
        <begin position="385"/>
        <end position="387"/>
    </location>
</feature>
<feature type="strand" evidence="3">
    <location>
        <begin position="389"/>
        <end position="392"/>
    </location>
</feature>
<feature type="helix" evidence="3">
    <location>
        <begin position="393"/>
        <end position="396"/>
    </location>
</feature>
<feature type="turn" evidence="3">
    <location>
        <begin position="400"/>
        <end position="402"/>
    </location>
</feature>
<feature type="strand" evidence="3">
    <location>
        <begin position="412"/>
        <end position="416"/>
    </location>
</feature>
<feature type="turn" evidence="2">
    <location>
        <begin position="419"/>
        <end position="421"/>
    </location>
</feature>
<feature type="helix" evidence="3">
    <location>
        <begin position="424"/>
        <end position="435"/>
    </location>
</feature>
<feature type="turn" evidence="3">
    <location>
        <begin position="436"/>
        <end position="440"/>
    </location>
</feature>
<feature type="strand" evidence="3">
    <location>
        <begin position="441"/>
        <end position="444"/>
    </location>
</feature>
<feature type="strand" evidence="3">
    <location>
        <begin position="448"/>
        <end position="451"/>
    </location>
</feature>
<feature type="strand" evidence="3">
    <location>
        <begin position="454"/>
        <end position="456"/>
    </location>
</feature>
<feature type="helix" evidence="3">
    <location>
        <begin position="457"/>
        <end position="459"/>
    </location>
</feature>
<feature type="strand" evidence="3">
    <location>
        <begin position="462"/>
        <end position="464"/>
    </location>
</feature>
<accession>P28796</accession>
<reference key="1">
    <citation type="journal article" date="1992" name="J. Biol. Chem.">
        <title>Characterization of the tryptophanase operon of Proteus vulgaris. Cloning, nucleotide sequence, amino acid homology, and in vitro synthesis of the leader peptide and regulatory analysis.</title>
        <authorList>
            <person name="Kamath A.V."/>
            <person name="Yanofsky C."/>
        </authorList>
    </citation>
    <scope>NUCLEOTIDE SEQUENCE [GENOMIC DNA]</scope>
</reference>
<reference key="2">
    <citation type="journal article" date="1998" name="J. Mol. Biol.">
        <title>Crystal structure of tryptophanase.</title>
        <authorList>
            <person name="Isupov M.N."/>
            <person name="Antson A.A."/>
            <person name="Dodson E.J."/>
            <person name="Dodson G.G."/>
            <person name="Dementieva I.S."/>
            <person name="Zakomirdina L.N."/>
            <person name="Wilson K.S."/>
            <person name="Dauter Z."/>
            <person name="Lebedev A.A."/>
            <person name="Harutyunyan E.H."/>
        </authorList>
    </citation>
    <scope>X-RAY CRYSTALLOGRAPHY (2.1 ANGSTROMS)</scope>
    <scope>PYRIDOXAL PHOSPHATE AT LYS-266</scope>
</reference>
<proteinExistence type="evidence at protein level"/>
<sequence>MAKRIVEPFRIKMVEKIRVPSREEREAALKEAGYNPFLLPSSAVYIDLLTDSGTNAMSDHQWAAMITGDEAYAGSRNYYDLKDKAKELFNYDYIIPAHQGRGAENILFPVLLKYKQKEGKAKNPVFISNFHFDTTAAHVELNGCKAINIVTEKAFDSETYDDWKGDFDIKKLKENIAQHGADNIVAIVSTVTCNSAGGQPVSMSNLKEVYEIAKQHGIFVVMDSARFCENAYFIKARDPKYKNATIKEVIFDMYKYADALTMSAKKDPLLNIGGLVAIRDNEEIFTLARQRCVPMEGFVTYGGLAGRDMAAMVQGLEEGTEEEYLHYRIGQVKYLGDRLREAGIPIQYPTGGHAVFVDCKKLVPQIPGDQFPAQAVINALYLESGVRAVEIGSFLLGRDPATGEQKHADMEFMRLTIARRVYTNDHMDYIADALIGLKEKFATLKGLEFEYEPPVLRHFTARLKPIE</sequence>
<gene>
    <name type="primary">tnaA</name>
</gene>